<evidence type="ECO:0000250" key="1">
    <source>
        <dbReference type="UniProtKB" id="P58749"/>
    </source>
</evidence>
<evidence type="ECO:0000250" key="2">
    <source>
        <dbReference type="UniProtKB" id="Q9BZW5"/>
    </source>
</evidence>
<evidence type="ECO:0000255" key="3"/>
<evidence type="ECO:0000255" key="4">
    <source>
        <dbReference type="PROSITE-ProRule" id="PRU01087"/>
    </source>
</evidence>
<evidence type="ECO:0000305" key="5"/>
<feature type="chain" id="PRO_0000366932" description="Transmembrane 6 superfamily member 1">
    <location>
        <begin position="1"/>
        <end position="370"/>
    </location>
</feature>
<feature type="transmembrane region" description="Helical; Name=1" evidence="3">
    <location>
        <begin position="3"/>
        <end position="23"/>
    </location>
</feature>
<feature type="transmembrane region" description="Helical; Name=2" evidence="3">
    <location>
        <begin position="34"/>
        <end position="54"/>
    </location>
</feature>
<feature type="transmembrane region" description="Helical; Name=3" evidence="3">
    <location>
        <begin position="62"/>
        <end position="82"/>
    </location>
</feature>
<feature type="transmembrane region" description="Helical; Name=4" evidence="3">
    <location>
        <begin position="110"/>
        <end position="130"/>
    </location>
</feature>
<feature type="transmembrane region" description="Helical; Name=5" evidence="3">
    <location>
        <begin position="139"/>
        <end position="159"/>
    </location>
</feature>
<feature type="transmembrane region" description="Helical; Name=6" evidence="3">
    <location>
        <begin position="166"/>
        <end position="186"/>
    </location>
</feature>
<feature type="transmembrane region" description="Helical; Name=7" evidence="3">
    <location>
        <begin position="218"/>
        <end position="238"/>
    </location>
</feature>
<feature type="transmembrane region" description="Helical; Name=8" evidence="3">
    <location>
        <begin position="268"/>
        <end position="288"/>
    </location>
</feature>
<feature type="transmembrane region" description="Helical; Name=9" evidence="3">
    <location>
        <begin position="331"/>
        <end position="351"/>
    </location>
</feature>
<feature type="domain" description="EXPERA 1" evidence="4">
    <location>
        <begin position="60"/>
        <end position="185"/>
    </location>
</feature>
<feature type="domain" description="EXPERA 2" evidence="4">
    <location>
        <begin position="216"/>
        <end position="350"/>
    </location>
</feature>
<gene>
    <name type="primary">TM6SF1</name>
</gene>
<keyword id="KW-0458">Lysosome</keyword>
<keyword id="KW-0472">Membrane</keyword>
<keyword id="KW-1185">Reference proteome</keyword>
<keyword id="KW-0677">Repeat</keyword>
<keyword id="KW-0812">Transmembrane</keyword>
<keyword id="KW-1133">Transmembrane helix</keyword>
<reference key="1">
    <citation type="submission" date="2007-06" db="EMBL/GenBank/DDBJ databases">
        <authorList>
            <consortium name="NIH - Mammalian Gene Collection (MGC) project"/>
        </authorList>
    </citation>
    <scope>NUCLEOTIDE SEQUENCE [LARGE SCALE MRNA]</scope>
    <source>
        <strain>Hereford</strain>
        <tissue>Heart ventricle</tissue>
    </source>
</reference>
<name>TM6S1_BOVIN</name>
<comment type="function">
    <text evidence="2">May function as sterol isomerase.</text>
</comment>
<comment type="subcellular location">
    <subcellularLocation>
        <location evidence="1">Lysosome membrane</location>
        <topology evidence="5">Multi-pass membrane protein</topology>
    </subcellularLocation>
</comment>
<comment type="similarity">
    <text evidence="5">Belongs to the TM6SF family.</text>
</comment>
<proteinExistence type="evidence at transcript level"/>
<accession>A6QL84</accession>
<organism>
    <name type="scientific">Bos taurus</name>
    <name type="common">Bovine</name>
    <dbReference type="NCBI Taxonomy" id="9913"/>
    <lineage>
        <taxon>Eukaryota</taxon>
        <taxon>Metazoa</taxon>
        <taxon>Chordata</taxon>
        <taxon>Craniata</taxon>
        <taxon>Vertebrata</taxon>
        <taxon>Euteleostomi</taxon>
        <taxon>Mammalia</taxon>
        <taxon>Eutheria</taxon>
        <taxon>Laurasiatheria</taxon>
        <taxon>Artiodactyla</taxon>
        <taxon>Ruminantia</taxon>
        <taxon>Pecora</taxon>
        <taxon>Bovidae</taxon>
        <taxon>Bovinae</taxon>
        <taxon>Bos</taxon>
    </lineage>
</organism>
<sequence length="370" mass="41651">MSASAATGVFVLSLSAIPVTYVFNHLAAQHDSWTIVGAAAVVLLLVALLARVLVKRKPPRDPLFYVYAVFGFTSVVNRIIGLEQDGIIDGFMTHYLREGEPYLNTAYGHMICYWDGSAHYLMYLVMVAAIAWEESYRTIGLYWVGSIIMSIVVFVPGNIVGKYGTRICPAFFLSIPYTCLPVWAGFRIYNQPSENYNYPSKVIQEVQAKDLLRRPFDLILVLCLLLATGFCVFRGLIALDCPAELCRLYTQFQEPYLKDPAAYPKIQMLAYLFYSVPYFVIALYGLVVPGCFWMPDITLIHAGGLAQAQFSHIGASLHARTAYVYRVPEEAKIIFLALNIAYGVLPQLLAYRCIYRPEFFIKTKADEKVE</sequence>
<protein>
    <recommendedName>
        <fullName>Transmembrane 6 superfamily member 1</fullName>
    </recommendedName>
</protein>
<dbReference type="EMBL" id="BC147874">
    <property type="protein sequence ID" value="AAI47875.1"/>
    <property type="molecule type" value="mRNA"/>
</dbReference>
<dbReference type="RefSeq" id="NP_001095765.1">
    <property type="nucleotide sequence ID" value="NM_001102295.2"/>
</dbReference>
<dbReference type="FunCoup" id="A6QL84">
    <property type="interactions" value="231"/>
</dbReference>
<dbReference type="STRING" id="9913.ENSBTAP00000017175"/>
<dbReference type="PaxDb" id="9913-ENSBTAP00000017175"/>
<dbReference type="GeneID" id="616003"/>
<dbReference type="KEGG" id="bta:616003"/>
<dbReference type="CTD" id="53346"/>
<dbReference type="eggNOG" id="ENOG502QRB2">
    <property type="taxonomic scope" value="Eukaryota"/>
</dbReference>
<dbReference type="InParanoid" id="A6QL84"/>
<dbReference type="OrthoDB" id="8181520at2759"/>
<dbReference type="Proteomes" id="UP000009136">
    <property type="component" value="Unplaced"/>
</dbReference>
<dbReference type="GO" id="GO:0005765">
    <property type="term" value="C:lysosomal membrane"/>
    <property type="evidence" value="ECO:0000250"/>
    <property type="project" value="UniProtKB"/>
</dbReference>
<dbReference type="CDD" id="cd21106">
    <property type="entry name" value="TM6SF1-like"/>
    <property type="match status" value="1"/>
</dbReference>
<dbReference type="InterPro" id="IPR033118">
    <property type="entry name" value="EXPERA"/>
</dbReference>
<dbReference type="InterPro" id="IPR047195">
    <property type="entry name" value="TM6SF1-like"/>
</dbReference>
<dbReference type="PANTHER" id="PTHR14568:SF10">
    <property type="entry name" value="TRANSMEMBRANE 6 SUPERFAMILY MEMBER 1"/>
    <property type="match status" value="1"/>
</dbReference>
<dbReference type="PANTHER" id="PTHR14568">
    <property type="entry name" value="TRANSMEMBRANE SUPERFAMILY 6 MEMBER 1/2"/>
    <property type="match status" value="1"/>
</dbReference>
<dbReference type="Pfam" id="PF05241">
    <property type="entry name" value="EBP"/>
    <property type="match status" value="1"/>
</dbReference>
<dbReference type="PROSITE" id="PS51751">
    <property type="entry name" value="EXPERA"/>
    <property type="match status" value="2"/>
</dbReference>